<keyword id="KW-0997">Cell inner membrane</keyword>
<keyword id="KW-1003">Cell membrane</keyword>
<keyword id="KW-0378">Hydrolase</keyword>
<keyword id="KW-0472">Membrane</keyword>
<keyword id="KW-0479">Metal-binding</keyword>
<keyword id="KW-0482">Metalloprotease</keyword>
<keyword id="KW-0645">Protease</keyword>
<keyword id="KW-1185">Reference proteome</keyword>
<keyword id="KW-0812">Transmembrane</keyword>
<keyword id="KW-1133">Transmembrane helix</keyword>
<keyword id="KW-0862">Zinc</keyword>
<sequence>MMRIALFLLTNLAVMLVFGLVLSLTGIQSSSVQGLMIMAGLFGFGGAFVSLLMSKWMALRSVGGEVIERPRNETEYWLLETVRRQSQQVGIAMPQVAIYQAPDINAFATGARRDASLVAVSTGLLQNMSRDEAEAVIAHEISHVANGDMVTMTLIQGVVNTFVIFISRLIAQIAAGFLSGDRDGESNSPGNPMVYFAVSMVLELVFGILASIITMWFSRHREFHADAGSAKLVGREKMIAALQRLKTSYEPQEAGSMMAFCINGKSKTFSELFMSHPPLDKRIEALRSGQYLK</sequence>
<feature type="chain" id="PRO_0000138911" description="Protease HtpX">
    <location>
        <begin position="1"/>
        <end position="293"/>
    </location>
</feature>
<feature type="transmembrane region" description="Helical" evidence="1">
    <location>
        <begin position="4"/>
        <end position="24"/>
    </location>
</feature>
<feature type="transmembrane region" description="Helical" evidence="1">
    <location>
        <begin position="34"/>
        <end position="54"/>
    </location>
</feature>
<feature type="transmembrane region" description="Helical" evidence="1">
    <location>
        <begin position="158"/>
        <end position="178"/>
    </location>
</feature>
<feature type="transmembrane region" description="Helical" evidence="1">
    <location>
        <begin position="193"/>
        <end position="213"/>
    </location>
</feature>
<feature type="active site" evidence="1">
    <location>
        <position position="140"/>
    </location>
</feature>
<feature type="binding site" evidence="1">
    <location>
        <position position="139"/>
    </location>
    <ligand>
        <name>Zn(2+)</name>
        <dbReference type="ChEBI" id="CHEBI:29105"/>
        <note>catalytic</note>
    </ligand>
</feature>
<feature type="binding site" evidence="1">
    <location>
        <position position="143"/>
    </location>
    <ligand>
        <name>Zn(2+)</name>
        <dbReference type="ChEBI" id="CHEBI:29105"/>
        <note>catalytic</note>
    </ligand>
</feature>
<feature type="binding site" evidence="1">
    <location>
        <position position="222"/>
    </location>
    <ligand>
        <name>Zn(2+)</name>
        <dbReference type="ChEBI" id="CHEBI:29105"/>
        <note>catalytic</note>
    </ligand>
</feature>
<gene>
    <name evidence="1" type="primary">htpX</name>
    <name type="ordered locus">YPO1706</name>
    <name type="ordered locus">y1868</name>
    <name type="ordered locus">YP_1731</name>
</gene>
<organism>
    <name type="scientific">Yersinia pestis</name>
    <dbReference type="NCBI Taxonomy" id="632"/>
    <lineage>
        <taxon>Bacteria</taxon>
        <taxon>Pseudomonadati</taxon>
        <taxon>Pseudomonadota</taxon>
        <taxon>Gammaproteobacteria</taxon>
        <taxon>Enterobacterales</taxon>
        <taxon>Yersiniaceae</taxon>
        <taxon>Yersinia</taxon>
    </lineage>
</organism>
<dbReference type="EC" id="3.4.24.-" evidence="1"/>
<dbReference type="EMBL" id="AL590842">
    <property type="protein sequence ID" value="CAL20349.1"/>
    <property type="molecule type" value="Genomic_DNA"/>
</dbReference>
<dbReference type="EMBL" id="AE009952">
    <property type="protein sequence ID" value="AAM85435.1"/>
    <property type="molecule type" value="Genomic_DNA"/>
</dbReference>
<dbReference type="EMBL" id="AE017042">
    <property type="protein sequence ID" value="AAS61959.1"/>
    <property type="molecule type" value="Genomic_DNA"/>
</dbReference>
<dbReference type="PIR" id="AB0208">
    <property type="entry name" value="AB0208"/>
</dbReference>
<dbReference type="RefSeq" id="WP_002210847.1">
    <property type="nucleotide sequence ID" value="NZ_WUCM01000041.1"/>
</dbReference>
<dbReference type="RefSeq" id="YP_002346709.1">
    <property type="nucleotide sequence ID" value="NC_003143.1"/>
</dbReference>
<dbReference type="SMR" id="Q8ZFJ7"/>
<dbReference type="IntAct" id="Q8ZFJ7">
    <property type="interactions" value="1"/>
</dbReference>
<dbReference type="STRING" id="214092.YPO1706"/>
<dbReference type="MEROPS" id="M48.002"/>
<dbReference type="PaxDb" id="214092-YPO1706"/>
<dbReference type="DNASU" id="1146815"/>
<dbReference type="EnsemblBacteria" id="AAS61959">
    <property type="protein sequence ID" value="AAS61959"/>
    <property type="gene ID" value="YP_1731"/>
</dbReference>
<dbReference type="GeneID" id="57976872"/>
<dbReference type="KEGG" id="ype:YPO1706"/>
<dbReference type="KEGG" id="ypk:y1868"/>
<dbReference type="KEGG" id="ypm:YP_1731"/>
<dbReference type="PATRIC" id="fig|1028802.3.peg.1934"/>
<dbReference type="eggNOG" id="COG0501">
    <property type="taxonomic scope" value="Bacteria"/>
</dbReference>
<dbReference type="HOGENOM" id="CLU_042266_1_0_6"/>
<dbReference type="OMA" id="AVCCTEG"/>
<dbReference type="OrthoDB" id="15218at2"/>
<dbReference type="Proteomes" id="UP000000815">
    <property type="component" value="Chromosome"/>
</dbReference>
<dbReference type="Proteomes" id="UP000001019">
    <property type="component" value="Chromosome"/>
</dbReference>
<dbReference type="Proteomes" id="UP000002490">
    <property type="component" value="Chromosome"/>
</dbReference>
<dbReference type="GO" id="GO:0005886">
    <property type="term" value="C:plasma membrane"/>
    <property type="evidence" value="ECO:0007669"/>
    <property type="project" value="UniProtKB-SubCell"/>
</dbReference>
<dbReference type="GO" id="GO:0004222">
    <property type="term" value="F:metalloendopeptidase activity"/>
    <property type="evidence" value="ECO:0007669"/>
    <property type="project" value="UniProtKB-UniRule"/>
</dbReference>
<dbReference type="GO" id="GO:0008270">
    <property type="term" value="F:zinc ion binding"/>
    <property type="evidence" value="ECO:0007669"/>
    <property type="project" value="UniProtKB-UniRule"/>
</dbReference>
<dbReference type="GO" id="GO:0006508">
    <property type="term" value="P:proteolysis"/>
    <property type="evidence" value="ECO:0007669"/>
    <property type="project" value="UniProtKB-KW"/>
</dbReference>
<dbReference type="CDD" id="cd07335">
    <property type="entry name" value="M48B_HtpX_like"/>
    <property type="match status" value="1"/>
</dbReference>
<dbReference type="FunFam" id="3.30.2010.10:FF:000001">
    <property type="entry name" value="Protease HtpX"/>
    <property type="match status" value="1"/>
</dbReference>
<dbReference type="Gene3D" id="3.30.2010.10">
    <property type="entry name" value="Metalloproteases ('zincins'), catalytic domain"/>
    <property type="match status" value="1"/>
</dbReference>
<dbReference type="HAMAP" id="MF_00188">
    <property type="entry name" value="Pept_M48_protease_HtpX"/>
    <property type="match status" value="1"/>
</dbReference>
<dbReference type="InterPro" id="IPR050083">
    <property type="entry name" value="HtpX_protease"/>
</dbReference>
<dbReference type="InterPro" id="IPR022919">
    <property type="entry name" value="Pept_M48_protease_HtpX"/>
</dbReference>
<dbReference type="InterPro" id="IPR001915">
    <property type="entry name" value="Peptidase_M48"/>
</dbReference>
<dbReference type="NCBIfam" id="NF003965">
    <property type="entry name" value="PRK05457.1"/>
    <property type="match status" value="1"/>
</dbReference>
<dbReference type="PANTHER" id="PTHR43221">
    <property type="entry name" value="PROTEASE HTPX"/>
    <property type="match status" value="1"/>
</dbReference>
<dbReference type="PANTHER" id="PTHR43221:SF1">
    <property type="entry name" value="PROTEASE HTPX"/>
    <property type="match status" value="1"/>
</dbReference>
<dbReference type="Pfam" id="PF01435">
    <property type="entry name" value="Peptidase_M48"/>
    <property type="match status" value="1"/>
</dbReference>
<name>HTPX_YERPE</name>
<comment type="cofactor">
    <cofactor evidence="1">
        <name>Zn(2+)</name>
        <dbReference type="ChEBI" id="CHEBI:29105"/>
    </cofactor>
    <text evidence="1">Binds 1 zinc ion per subunit.</text>
</comment>
<comment type="subcellular location">
    <subcellularLocation>
        <location evidence="1">Cell inner membrane</location>
        <topology evidence="1">Multi-pass membrane protein</topology>
    </subcellularLocation>
</comment>
<comment type="similarity">
    <text evidence="1">Belongs to the peptidase M48B family.</text>
</comment>
<evidence type="ECO:0000255" key="1">
    <source>
        <dbReference type="HAMAP-Rule" id="MF_00188"/>
    </source>
</evidence>
<protein>
    <recommendedName>
        <fullName evidence="1">Protease HtpX</fullName>
        <ecNumber evidence="1">3.4.24.-</ecNumber>
    </recommendedName>
    <alternativeName>
        <fullName evidence="1">Heat shock protein HtpX</fullName>
    </alternativeName>
</protein>
<reference key="1">
    <citation type="journal article" date="2001" name="Nature">
        <title>Genome sequence of Yersinia pestis, the causative agent of plague.</title>
        <authorList>
            <person name="Parkhill J."/>
            <person name="Wren B.W."/>
            <person name="Thomson N.R."/>
            <person name="Titball R.W."/>
            <person name="Holden M.T.G."/>
            <person name="Prentice M.B."/>
            <person name="Sebaihia M."/>
            <person name="James K.D."/>
            <person name="Churcher C.M."/>
            <person name="Mungall K.L."/>
            <person name="Baker S."/>
            <person name="Basham D."/>
            <person name="Bentley S.D."/>
            <person name="Brooks K."/>
            <person name="Cerdeno-Tarraga A.-M."/>
            <person name="Chillingworth T."/>
            <person name="Cronin A."/>
            <person name="Davies R.M."/>
            <person name="Davis P."/>
            <person name="Dougan G."/>
            <person name="Feltwell T."/>
            <person name="Hamlin N."/>
            <person name="Holroyd S."/>
            <person name="Jagels K."/>
            <person name="Karlyshev A.V."/>
            <person name="Leather S."/>
            <person name="Moule S."/>
            <person name="Oyston P.C.F."/>
            <person name="Quail M.A."/>
            <person name="Rutherford K.M."/>
            <person name="Simmonds M."/>
            <person name="Skelton J."/>
            <person name="Stevens K."/>
            <person name="Whitehead S."/>
            <person name="Barrell B.G."/>
        </authorList>
    </citation>
    <scope>NUCLEOTIDE SEQUENCE [LARGE SCALE GENOMIC DNA]</scope>
    <source>
        <strain>CO-92 / Biovar Orientalis</strain>
    </source>
</reference>
<reference key="2">
    <citation type="journal article" date="2002" name="J. Bacteriol.">
        <title>Genome sequence of Yersinia pestis KIM.</title>
        <authorList>
            <person name="Deng W."/>
            <person name="Burland V."/>
            <person name="Plunkett G. III"/>
            <person name="Boutin A."/>
            <person name="Mayhew G.F."/>
            <person name="Liss P."/>
            <person name="Perna N.T."/>
            <person name="Rose D.J."/>
            <person name="Mau B."/>
            <person name="Zhou S."/>
            <person name="Schwartz D.C."/>
            <person name="Fetherston J.D."/>
            <person name="Lindler L.E."/>
            <person name="Brubaker R.R."/>
            <person name="Plano G.V."/>
            <person name="Straley S.C."/>
            <person name="McDonough K.A."/>
            <person name="Nilles M.L."/>
            <person name="Matson J.S."/>
            <person name="Blattner F.R."/>
            <person name="Perry R.D."/>
        </authorList>
    </citation>
    <scope>NUCLEOTIDE SEQUENCE [LARGE SCALE GENOMIC DNA]</scope>
    <source>
        <strain>KIM10+ / Biovar Mediaevalis</strain>
    </source>
</reference>
<reference key="3">
    <citation type="journal article" date="2004" name="DNA Res.">
        <title>Complete genome sequence of Yersinia pestis strain 91001, an isolate avirulent to humans.</title>
        <authorList>
            <person name="Song Y."/>
            <person name="Tong Z."/>
            <person name="Wang J."/>
            <person name="Wang L."/>
            <person name="Guo Z."/>
            <person name="Han Y."/>
            <person name="Zhang J."/>
            <person name="Pei D."/>
            <person name="Zhou D."/>
            <person name="Qin H."/>
            <person name="Pang X."/>
            <person name="Han Y."/>
            <person name="Zhai J."/>
            <person name="Li M."/>
            <person name="Cui B."/>
            <person name="Qi Z."/>
            <person name="Jin L."/>
            <person name="Dai R."/>
            <person name="Chen F."/>
            <person name="Li S."/>
            <person name="Ye C."/>
            <person name="Du Z."/>
            <person name="Lin W."/>
            <person name="Wang J."/>
            <person name="Yu J."/>
            <person name="Yang H."/>
            <person name="Wang J."/>
            <person name="Huang P."/>
            <person name="Yang R."/>
        </authorList>
    </citation>
    <scope>NUCLEOTIDE SEQUENCE [LARGE SCALE GENOMIC DNA]</scope>
    <source>
        <strain>91001 / Biovar Mediaevalis</strain>
    </source>
</reference>
<accession>Q8ZFJ7</accession>
<accession>Q0WG79</accession>
<proteinExistence type="inferred from homology"/>